<reference key="1">
    <citation type="journal article" date="1995" name="Plant Mol. Biol. Rep.">
        <title>Nucleotide sequence of the cyanelle DNA from Cyanophora paradoxa.</title>
        <authorList>
            <person name="Stirewalt V.L."/>
            <person name="Michalowski C.B."/>
            <person name="Loeffelhardt W."/>
            <person name="Bohnert H.J."/>
            <person name="Bryant D.A."/>
        </authorList>
    </citation>
    <scope>NUCLEOTIDE SEQUENCE [LARGE SCALE GENOMIC DNA]</scope>
    <source>
        <strain>UTEX LB 555 / Pringsheim</strain>
    </source>
</reference>
<reference key="2">
    <citation type="book" date="1997" name="Eukaryotism and symbiosis">
        <title>The complete sequence of the cyanelle genome of Cyanophora paradoxa: the genetic complexity of a primitive plastid.</title>
        <editorList>
            <person name="Schenk H.E.A."/>
            <person name="Herrmann R."/>
            <person name="Jeon K.W."/>
            <person name="Mueller N.E."/>
            <person name="Schwemmler W."/>
        </editorList>
        <authorList>
            <person name="Loeffelhardt W."/>
            <person name="Stirewalt V.L."/>
            <person name="Michalowski C.B."/>
            <person name="Annarella M."/>
            <person name="Farley J.Y."/>
            <person name="Schluchter W.M."/>
            <person name="Chung S."/>
            <person name="Newmann-Spallart C."/>
            <person name="Steiner J.M."/>
            <person name="Jakowitsch J."/>
            <person name="Bohnert H.J."/>
            <person name="Bryant D.A."/>
        </authorList>
    </citation>
    <scope>NUCLEOTIDE SEQUENCE [LARGE SCALE GENOMIC DNA]</scope>
    <source>
        <strain>UTEX LB 555 / Pringsheim</strain>
    </source>
</reference>
<name>PETN_CYAPA</name>
<geneLocation type="cyanelle"/>
<protein>
    <recommendedName>
        <fullName>Cytochrome b6-f complex subunit 8</fullName>
    </recommendedName>
    <alternativeName>
        <fullName>Cytochrome b6-f complex subunit PetN</fullName>
    </alternativeName>
    <alternativeName>
        <fullName>Cytochrome b6-f complex subunit VIII</fullName>
    </alternativeName>
</protein>
<sequence>MDILSLGWAALMASFTFSLSLVVWGRNGF</sequence>
<accession>P48258</accession>
<dbReference type="EMBL" id="U30821">
    <property type="protein sequence ID" value="AAA81247.1"/>
    <property type="molecule type" value="Genomic_DNA"/>
</dbReference>
<dbReference type="PIR" id="T06904">
    <property type="entry name" value="T06904"/>
</dbReference>
<dbReference type="RefSeq" id="NP_043216.1">
    <property type="nucleotide sequence ID" value="NC_001675.1"/>
</dbReference>
<dbReference type="SMR" id="P48258"/>
<dbReference type="GeneID" id="801673"/>
<dbReference type="GO" id="GO:0033115">
    <property type="term" value="C:cyanelle thylakoid membrane"/>
    <property type="evidence" value="ECO:0007669"/>
    <property type="project" value="UniProtKB-SubCell"/>
</dbReference>
<dbReference type="GO" id="GO:0009512">
    <property type="term" value="C:cytochrome b6f complex"/>
    <property type="evidence" value="ECO:0007669"/>
    <property type="project" value="InterPro"/>
</dbReference>
<dbReference type="GO" id="GO:0045158">
    <property type="term" value="F:electron transporter, transferring electrons within cytochrome b6/f complex of photosystem II activity"/>
    <property type="evidence" value="ECO:0007669"/>
    <property type="project" value="InterPro"/>
</dbReference>
<dbReference type="GO" id="GO:0017004">
    <property type="term" value="P:cytochrome complex assembly"/>
    <property type="evidence" value="ECO:0007669"/>
    <property type="project" value="UniProtKB-UniRule"/>
</dbReference>
<dbReference type="GO" id="GO:0015979">
    <property type="term" value="P:photosynthesis"/>
    <property type="evidence" value="ECO:0007669"/>
    <property type="project" value="UniProtKB-KW"/>
</dbReference>
<dbReference type="HAMAP" id="MF_00395">
    <property type="entry name" value="Cytb6_f_PetN"/>
    <property type="match status" value="1"/>
</dbReference>
<dbReference type="InterPro" id="IPR036143">
    <property type="entry name" value="Cytochr_b6-f_cplx_su8_sf"/>
</dbReference>
<dbReference type="InterPro" id="IPR005497">
    <property type="entry name" value="Cytochrome_b6-f_cplx_su8"/>
</dbReference>
<dbReference type="Pfam" id="PF03742">
    <property type="entry name" value="PetN"/>
    <property type="match status" value="1"/>
</dbReference>
<dbReference type="SUPFAM" id="SSF103451">
    <property type="entry name" value="PetN subunit of the cytochrome b6f complex"/>
    <property type="match status" value="1"/>
</dbReference>
<proteinExistence type="inferred from homology"/>
<comment type="function">
    <text evidence="1">Component of the cytochrome b6-f complex, which mediates electron transfer between photosystem II (PSII) and photosystem I (PSI), cyclic electron flow around PSI, and state transitions.</text>
</comment>
<comment type="subunit">
    <text evidence="1">The 4 large subunits of the cytochrome b6-f complex are cytochrome b6, subunit IV (17 kDa polypeptide, PetD), cytochrome f and the Rieske protein, while the 4 small subunits are PetG, PetL, PetM and PetN. The complex functions as a dimer (By similarity).</text>
</comment>
<comment type="subcellular location">
    <subcellularLocation>
        <location evidence="1">Plastid</location>
        <location evidence="1">Cyanelle thylakoid membrane</location>
        <topology evidence="1">Single-pass membrane protein</topology>
    </subcellularLocation>
</comment>
<comment type="similarity">
    <text evidence="3">Belongs to the PetN family.</text>
</comment>
<organism>
    <name type="scientific">Cyanophora paradoxa</name>
    <dbReference type="NCBI Taxonomy" id="2762"/>
    <lineage>
        <taxon>Eukaryota</taxon>
        <taxon>Glaucocystophyceae</taxon>
        <taxon>Cyanophoraceae</taxon>
        <taxon>Cyanophora</taxon>
    </lineage>
</organism>
<feature type="chain" id="PRO_0000217107" description="Cytochrome b6-f complex subunit 8">
    <location>
        <begin position="1"/>
        <end position="29"/>
    </location>
</feature>
<feature type="transmembrane region" description="Helical" evidence="2">
    <location>
        <begin position="3"/>
        <end position="23"/>
    </location>
</feature>
<evidence type="ECO:0000250" key="1"/>
<evidence type="ECO:0000255" key="2"/>
<evidence type="ECO:0000305" key="3"/>
<keyword id="KW-0194">Cyanelle</keyword>
<keyword id="KW-0249">Electron transport</keyword>
<keyword id="KW-0472">Membrane</keyword>
<keyword id="KW-0602">Photosynthesis</keyword>
<keyword id="KW-0934">Plastid</keyword>
<keyword id="KW-0793">Thylakoid</keyword>
<keyword id="KW-0812">Transmembrane</keyword>
<keyword id="KW-1133">Transmembrane helix</keyword>
<keyword id="KW-0813">Transport</keyword>
<gene>
    <name type="primary">petN</name>
    <name type="synonym">ycf6</name>
</gene>